<geneLocation type="chloroplast"/>
<comment type="function">
    <text evidence="1">Found at the monomer-monomer interface of the photosystem II (PS II) dimer, plays a role in assembly and dimerization of PSII. PSII is a light-driven water plastoquinone oxidoreductase, using light energy to abstract electrons from H(2)O, generating a proton gradient subsequently used for ATP formation.</text>
</comment>
<comment type="subunit">
    <text evidence="1">PSII is composed of 1 copy each of membrane proteins PsbA, PsbB, PsbC, PsbD, PsbE, PsbF, PsbH, PsbI, PsbJ, PsbK, PsbL, PsbM, PsbT, PsbY, PsbZ, Psb30/Ycf12, at least 3 peripheral proteins of the oxygen-evolving complex and a large number of cofactors. It forms dimeric complexes.</text>
</comment>
<comment type="subcellular location">
    <subcellularLocation>
        <location evidence="1">Plastid</location>
        <location evidence="1">Chloroplast thylakoid membrane</location>
        <topology evidence="1">Single-pass membrane protein</topology>
    </subcellularLocation>
</comment>
<comment type="similarity">
    <text evidence="1">Belongs to the PsbT family.</text>
</comment>
<gene>
    <name evidence="1" type="primary">psbT</name>
</gene>
<name>PSBT_SAUCE</name>
<organism>
    <name type="scientific">Saururus cernuus</name>
    <name type="common">Lizard's tail</name>
    <dbReference type="NCBI Taxonomy" id="13260"/>
    <lineage>
        <taxon>Eukaryota</taxon>
        <taxon>Viridiplantae</taxon>
        <taxon>Streptophyta</taxon>
        <taxon>Embryophyta</taxon>
        <taxon>Tracheophyta</taxon>
        <taxon>Spermatophyta</taxon>
        <taxon>Magnoliopsida</taxon>
        <taxon>Magnoliidae</taxon>
        <taxon>Piperales</taxon>
        <taxon>Saururaceae</taxon>
        <taxon>Saururus</taxon>
    </lineage>
</organism>
<protein>
    <recommendedName>
        <fullName evidence="1">Photosystem II reaction center protein T</fullName>
        <shortName evidence="1">PSII-T</shortName>
    </recommendedName>
</protein>
<reference key="1">
    <citation type="journal article" date="2000" name="Am. J. Bot.">
        <title>Utility of 17 chloroplast genes for inferring the phylogeny of the basal angiosperms.</title>
        <authorList>
            <person name="Graham S.W."/>
            <person name="Olmstead R.G."/>
        </authorList>
    </citation>
    <scope>NUCLEOTIDE SEQUENCE [GENOMIC DNA]</scope>
</reference>
<sequence length="35" mass="4109">MEALVYTFLLVSTLGIIFFAIFFREPPRISTKKMK</sequence>
<accession>Q9G2D7</accession>
<dbReference type="EMBL" id="AF123856">
    <property type="protein sequence ID" value="AAG26302.1"/>
    <property type="molecule type" value="Genomic_DNA"/>
</dbReference>
<dbReference type="RefSeq" id="YP_011086840.1">
    <property type="nucleotide sequence ID" value="NC_087887.1"/>
</dbReference>
<dbReference type="SMR" id="Q9G2D7"/>
<dbReference type="GeneID" id="89433388"/>
<dbReference type="GO" id="GO:0009535">
    <property type="term" value="C:chloroplast thylakoid membrane"/>
    <property type="evidence" value="ECO:0007669"/>
    <property type="project" value="UniProtKB-SubCell"/>
</dbReference>
<dbReference type="GO" id="GO:0009539">
    <property type="term" value="C:photosystem II reaction center"/>
    <property type="evidence" value="ECO:0007669"/>
    <property type="project" value="InterPro"/>
</dbReference>
<dbReference type="GO" id="GO:0015979">
    <property type="term" value="P:photosynthesis"/>
    <property type="evidence" value="ECO:0007669"/>
    <property type="project" value="UniProtKB-UniRule"/>
</dbReference>
<dbReference type="HAMAP" id="MF_00808">
    <property type="entry name" value="PSII_PsbT"/>
    <property type="match status" value="1"/>
</dbReference>
<dbReference type="InterPro" id="IPR001743">
    <property type="entry name" value="PSII_PsbT"/>
</dbReference>
<dbReference type="InterPro" id="IPR037268">
    <property type="entry name" value="PSII_PsbT_sf"/>
</dbReference>
<dbReference type="PANTHER" id="PTHR36411">
    <property type="match status" value="1"/>
</dbReference>
<dbReference type="PANTHER" id="PTHR36411:SF2">
    <property type="entry name" value="PHOTOSYSTEM II REACTION CENTER PROTEIN T"/>
    <property type="match status" value="1"/>
</dbReference>
<dbReference type="Pfam" id="PF01405">
    <property type="entry name" value="PsbT"/>
    <property type="match status" value="1"/>
</dbReference>
<dbReference type="SUPFAM" id="SSF161029">
    <property type="entry name" value="Photosystem II reaction center protein T, PsbT"/>
    <property type="match status" value="1"/>
</dbReference>
<feature type="chain" id="PRO_0000217979" description="Photosystem II reaction center protein T">
    <location>
        <begin position="1"/>
        <end position="35"/>
    </location>
</feature>
<feature type="transmembrane region" description="Helical" evidence="1">
    <location>
        <begin position="3"/>
        <end position="23"/>
    </location>
</feature>
<keyword id="KW-0150">Chloroplast</keyword>
<keyword id="KW-0472">Membrane</keyword>
<keyword id="KW-0602">Photosynthesis</keyword>
<keyword id="KW-0604">Photosystem II</keyword>
<keyword id="KW-0934">Plastid</keyword>
<keyword id="KW-0793">Thylakoid</keyword>
<keyword id="KW-0812">Transmembrane</keyword>
<keyword id="KW-1133">Transmembrane helix</keyword>
<evidence type="ECO:0000255" key="1">
    <source>
        <dbReference type="HAMAP-Rule" id="MF_00808"/>
    </source>
</evidence>
<proteinExistence type="inferred from homology"/>